<organism>
    <name type="scientific">Pyropia haitanensis</name>
    <name type="common">Red seaweed</name>
    <name type="synonym">Porphyra haitanensis</name>
    <dbReference type="NCBI Taxonomy" id="1262161"/>
    <lineage>
        <taxon>Eukaryota</taxon>
        <taxon>Rhodophyta</taxon>
        <taxon>Bangiophyceae</taxon>
        <taxon>Bangiales</taxon>
        <taxon>Bangiaceae</taxon>
        <taxon>Pyropia</taxon>
    </lineage>
</organism>
<comment type="function">
    <text evidence="1">Light-harvesting photosynthetic bile pigment-protein from the phycobiliprotein complex. Allophycocyanin has a maximum absorption at approximately 650 nanometers (By similarity).</text>
</comment>
<comment type="subunit">
    <text>Heterodimer of an alpha and a beta chain.</text>
</comment>
<comment type="subcellular location">
    <subcellularLocation>
        <location evidence="1">Plastid</location>
        <location evidence="1">Chloroplast thylakoid membrane</location>
        <topology evidence="1">Peripheral membrane protein</topology>
        <orientation evidence="1">Stromal side</orientation>
    </subcellularLocation>
    <text evidence="1">Forms the core of the phycobilisome.</text>
</comment>
<comment type="PTM">
    <text evidence="1">Contains one covalently linked phycocyanobilin chromophore.</text>
</comment>
<comment type="similarity">
    <text evidence="2">Belongs to the phycobiliprotein family.</text>
</comment>
<proteinExistence type="inferred from homology"/>
<protein>
    <recommendedName>
        <fullName>Allophycocyanin beta chain</fullName>
    </recommendedName>
</protein>
<geneLocation type="chloroplast"/>
<reference key="1">
    <citation type="submission" date="2003-08" db="EMBL/GenBank/DDBJ databases">
        <title>Cloning and sequence analysis of allophycocyanin gene of Porphyra haitanensis.</title>
        <authorList>
            <person name="Zuo Z.-H."/>
            <person name="Deng Y.-G."/>
            <person name="Chen Y.-X."/>
        </authorList>
    </citation>
    <scope>NUCLEOTIDE SEQUENCE [GENOMIC DNA]</scope>
</reference>
<sequence>MQDAITSVINAADVQGKYLDDSSVEKLRGYFQTGELRVRAAATIAANAATIIKESVAKSLLYSDITRPGGNMYTTRRYAACIRDLDYYLRYATYGMLAGDPSILEERVLNGLKETYNSLGVPIGATIQAILAMKEVTISLVGPDAGKEMGLYFDYICSGLG</sequence>
<feature type="chain" id="PRO_0000277331" description="Allophycocyanin beta chain">
    <location>
        <begin position="1"/>
        <end position="161"/>
    </location>
</feature>
<feature type="binding site" description="covalent" evidence="1">
    <location>
        <position position="81"/>
    </location>
    <ligand>
        <name>(2R,3E)-phycocyanobilin</name>
        <dbReference type="ChEBI" id="CHEBI:85275"/>
    </ligand>
</feature>
<feature type="modified residue" description="N4-methylasparagine" evidence="1">
    <location>
        <position position="71"/>
    </location>
</feature>
<accession>Q6UDP8</accession>
<evidence type="ECO:0000250" key="1"/>
<evidence type="ECO:0000305" key="2"/>
<name>APCB_PYRHA</name>
<gene>
    <name type="primary">apcB</name>
</gene>
<dbReference type="EMBL" id="AY372218">
    <property type="protein sequence ID" value="AAQ73315.1"/>
    <property type="molecule type" value="Genomic_DNA"/>
</dbReference>
<dbReference type="SMR" id="Q6UDP8"/>
<dbReference type="GO" id="GO:0009535">
    <property type="term" value="C:chloroplast thylakoid membrane"/>
    <property type="evidence" value="ECO:0007669"/>
    <property type="project" value="UniProtKB-SubCell"/>
</dbReference>
<dbReference type="GO" id="GO:0030089">
    <property type="term" value="C:phycobilisome"/>
    <property type="evidence" value="ECO:0007669"/>
    <property type="project" value="UniProtKB-KW"/>
</dbReference>
<dbReference type="GO" id="GO:0015979">
    <property type="term" value="P:photosynthesis"/>
    <property type="evidence" value="ECO:0007669"/>
    <property type="project" value="UniProtKB-KW"/>
</dbReference>
<dbReference type="CDD" id="cd12126">
    <property type="entry name" value="APC_beta"/>
    <property type="match status" value="1"/>
</dbReference>
<dbReference type="Gene3D" id="1.10.490.20">
    <property type="entry name" value="Phycocyanins"/>
    <property type="match status" value="1"/>
</dbReference>
<dbReference type="InterPro" id="IPR006245">
    <property type="entry name" value="Allophycocyanin_b"/>
</dbReference>
<dbReference type="InterPro" id="IPR009050">
    <property type="entry name" value="Globin-like_sf"/>
</dbReference>
<dbReference type="InterPro" id="IPR012128">
    <property type="entry name" value="Phycobilisome_asu/bsu"/>
</dbReference>
<dbReference type="InterPro" id="IPR038719">
    <property type="entry name" value="Phycobilisome_asu/bsu_sf"/>
</dbReference>
<dbReference type="NCBIfam" id="TIGR01337">
    <property type="entry name" value="apcB"/>
    <property type="match status" value="1"/>
</dbReference>
<dbReference type="PANTHER" id="PTHR34011:SF3">
    <property type="entry name" value="ALLOPHYCOCYANIN BETA CHAIN"/>
    <property type="match status" value="1"/>
</dbReference>
<dbReference type="PANTHER" id="PTHR34011">
    <property type="entry name" value="PHYCOBILISOME 32.1 KDA LINKER POLYPEPTIDE, PHYCOCYANIN-ASSOCIATED, ROD 2-RELATED"/>
    <property type="match status" value="1"/>
</dbReference>
<dbReference type="Pfam" id="PF00502">
    <property type="entry name" value="Phycobilisome"/>
    <property type="match status" value="1"/>
</dbReference>
<dbReference type="PIRSF" id="PIRSF000081">
    <property type="entry name" value="Phycocyanin"/>
    <property type="match status" value="1"/>
</dbReference>
<dbReference type="SUPFAM" id="SSF46458">
    <property type="entry name" value="Globin-like"/>
    <property type="match status" value="1"/>
</dbReference>
<keyword id="KW-0042">Antenna complex</keyword>
<keyword id="KW-0089">Bile pigment</keyword>
<keyword id="KW-0150">Chloroplast</keyword>
<keyword id="KW-0157">Chromophore</keyword>
<keyword id="KW-0249">Electron transport</keyword>
<keyword id="KW-0472">Membrane</keyword>
<keyword id="KW-0488">Methylation</keyword>
<keyword id="KW-0602">Photosynthesis</keyword>
<keyword id="KW-0605">Phycobilisome</keyword>
<keyword id="KW-0934">Plastid</keyword>
<keyword id="KW-0793">Thylakoid</keyword>
<keyword id="KW-0813">Transport</keyword>